<organism>
    <name type="scientific">Sepia officinalis</name>
    <name type="common">Common cuttlefish</name>
    <dbReference type="NCBI Taxonomy" id="6610"/>
    <lineage>
        <taxon>Eukaryota</taxon>
        <taxon>Metazoa</taxon>
        <taxon>Spiralia</taxon>
        <taxon>Lophotrochozoa</taxon>
        <taxon>Mollusca</taxon>
        <taxon>Cephalopoda</taxon>
        <taxon>Coleoidea</taxon>
        <taxon>Decapodiformes</taxon>
        <taxon>Sepiida</taxon>
        <taxon>Sepiina</taxon>
        <taxon>Sepiidae</taxon>
        <taxon>Sepia</taxon>
    </lineage>
</organism>
<gene>
    <name type="primary">RHO</name>
</gene>
<keyword id="KW-1003">Cell membrane</keyword>
<keyword id="KW-0966">Cell projection</keyword>
<keyword id="KW-0157">Chromophore</keyword>
<keyword id="KW-1015">Disulfide bond</keyword>
<keyword id="KW-0297">G-protein coupled receptor</keyword>
<keyword id="KW-0325">Glycoprotein</keyword>
<keyword id="KW-0449">Lipoprotein</keyword>
<keyword id="KW-0472">Membrane</keyword>
<keyword id="KW-0564">Palmitate</keyword>
<keyword id="KW-0597">Phosphoprotein</keyword>
<keyword id="KW-0600">Photoreceptor protein</keyword>
<keyword id="KW-0675">Receptor</keyword>
<keyword id="KW-0681">Retinal protein</keyword>
<keyword id="KW-0716">Sensory transduction</keyword>
<keyword id="KW-0807">Transducer</keyword>
<keyword id="KW-0812">Transmembrane</keyword>
<keyword id="KW-1133">Transmembrane helix</keyword>
<keyword id="KW-0844">Vision</keyword>
<reference key="1">
    <citation type="journal article" date="1998" name="J. Exp. Biol.">
        <title>The rhodopsin gene of the cuttlefish Sepia officinalis: sequence and spectral tuning.</title>
        <authorList>
            <person name="Bellingham J."/>
            <person name="Morris A.G."/>
            <person name="Hunt D.M."/>
        </authorList>
    </citation>
    <scope>NUCLEOTIDE SEQUENCE [MRNA]</scope>
    <source>
        <tissue>Retina</tissue>
    </source>
</reference>
<proteinExistence type="evidence at transcript level"/>
<dbReference type="EMBL" id="AF000947">
    <property type="protein sequence ID" value="AAC26329.1"/>
    <property type="molecule type" value="mRNA"/>
</dbReference>
<dbReference type="SMR" id="O16005"/>
<dbReference type="GlyCosmos" id="O16005">
    <property type="glycosylation" value="1 site, No reported glycans"/>
</dbReference>
<dbReference type="GO" id="GO:0042995">
    <property type="term" value="C:cell projection"/>
    <property type="evidence" value="ECO:0007669"/>
    <property type="project" value="UniProtKB-KW"/>
</dbReference>
<dbReference type="GO" id="GO:0016020">
    <property type="term" value="C:membrane"/>
    <property type="evidence" value="ECO:0000250"/>
    <property type="project" value="UniProtKB"/>
</dbReference>
<dbReference type="GO" id="GO:0005886">
    <property type="term" value="C:plasma membrane"/>
    <property type="evidence" value="ECO:0000250"/>
    <property type="project" value="UniProtKB"/>
</dbReference>
<dbReference type="GO" id="GO:0004930">
    <property type="term" value="F:G protein-coupled receptor activity"/>
    <property type="evidence" value="ECO:0007669"/>
    <property type="project" value="UniProtKB-KW"/>
</dbReference>
<dbReference type="GO" id="GO:0009881">
    <property type="term" value="F:photoreceptor activity"/>
    <property type="evidence" value="ECO:0007669"/>
    <property type="project" value="UniProtKB-KW"/>
</dbReference>
<dbReference type="GO" id="GO:0016918">
    <property type="term" value="F:retinal binding"/>
    <property type="evidence" value="ECO:0000250"/>
    <property type="project" value="UniProtKB"/>
</dbReference>
<dbReference type="GO" id="GO:0007602">
    <property type="term" value="P:phototransduction"/>
    <property type="evidence" value="ECO:0007669"/>
    <property type="project" value="UniProtKB-KW"/>
</dbReference>
<dbReference type="GO" id="GO:0007601">
    <property type="term" value="P:visual perception"/>
    <property type="evidence" value="ECO:0007669"/>
    <property type="project" value="UniProtKB-KW"/>
</dbReference>
<dbReference type="CDD" id="cd15337">
    <property type="entry name" value="7tmA_Opsin_Gq_invertebrates"/>
    <property type="match status" value="1"/>
</dbReference>
<dbReference type="FunFam" id="1.20.1070.10:FF:000044">
    <property type="entry name" value="Opsin, ultraviolet-sensitive"/>
    <property type="match status" value="1"/>
</dbReference>
<dbReference type="Gene3D" id="1.20.1070.10">
    <property type="entry name" value="Rhodopsin 7-helix transmembrane proteins"/>
    <property type="match status" value="1"/>
</dbReference>
<dbReference type="InterPro" id="IPR050125">
    <property type="entry name" value="GPCR_opsins"/>
</dbReference>
<dbReference type="InterPro" id="IPR000276">
    <property type="entry name" value="GPCR_Rhodpsn"/>
</dbReference>
<dbReference type="InterPro" id="IPR017452">
    <property type="entry name" value="GPCR_Rhodpsn_7TM"/>
</dbReference>
<dbReference type="InterPro" id="IPR001760">
    <property type="entry name" value="Opsin"/>
</dbReference>
<dbReference type="InterPro" id="IPR027430">
    <property type="entry name" value="Retinal_BS"/>
</dbReference>
<dbReference type="InterPro" id="IPR006031">
    <property type="entry name" value="XYPPX"/>
</dbReference>
<dbReference type="PANTHER" id="PTHR24240">
    <property type="entry name" value="OPSIN"/>
    <property type="match status" value="1"/>
</dbReference>
<dbReference type="Pfam" id="PF00001">
    <property type="entry name" value="7tm_1"/>
    <property type="match status" value="1"/>
</dbReference>
<dbReference type="Pfam" id="PF02162">
    <property type="entry name" value="XYPPX"/>
    <property type="match status" value="5"/>
</dbReference>
<dbReference type="PRINTS" id="PR00237">
    <property type="entry name" value="GPCRRHODOPSN"/>
</dbReference>
<dbReference type="PRINTS" id="PR00238">
    <property type="entry name" value="OPSIN"/>
</dbReference>
<dbReference type="PRINTS" id="PR00239">
    <property type="entry name" value="RHODOPSNTAIL"/>
</dbReference>
<dbReference type="SMART" id="SM01381">
    <property type="entry name" value="7TM_GPCR_Srsx"/>
    <property type="match status" value="1"/>
</dbReference>
<dbReference type="SUPFAM" id="SSF81321">
    <property type="entry name" value="Family A G protein-coupled receptor-like"/>
    <property type="match status" value="1"/>
</dbReference>
<dbReference type="PROSITE" id="PS00237">
    <property type="entry name" value="G_PROTEIN_RECEP_F1_1"/>
    <property type="match status" value="1"/>
</dbReference>
<dbReference type="PROSITE" id="PS50262">
    <property type="entry name" value="G_PROTEIN_RECEP_F1_2"/>
    <property type="match status" value="1"/>
</dbReference>
<dbReference type="PROSITE" id="PS00238">
    <property type="entry name" value="OPSIN"/>
    <property type="match status" value="1"/>
</dbReference>
<name>OPSD_SEPOF</name>
<feature type="chain" id="PRO_0000197747" description="Rhodopsin">
    <location>
        <begin position="1"/>
        <end position="464"/>
    </location>
</feature>
<feature type="topological domain" description="Extracellular" evidence="7">
    <location>
        <begin position="1"/>
        <end position="33"/>
    </location>
</feature>
<feature type="transmembrane region" description="Helical; Name=1" evidence="3">
    <location>
        <begin position="34"/>
        <end position="58"/>
    </location>
</feature>
<feature type="topological domain" description="Cytoplasmic" evidence="7">
    <location>
        <begin position="59"/>
        <end position="70"/>
    </location>
</feature>
<feature type="transmembrane region" description="Helical; Name=2" evidence="3">
    <location>
        <begin position="71"/>
        <end position="97"/>
    </location>
</feature>
<feature type="topological domain" description="Extracellular" evidence="7">
    <location>
        <begin position="98"/>
        <end position="109"/>
    </location>
</feature>
<feature type="transmembrane region" description="Helical; Name=3" evidence="3">
    <location>
        <begin position="110"/>
        <end position="131"/>
    </location>
</feature>
<feature type="topological domain" description="Cytoplasmic" evidence="7">
    <location>
        <begin position="132"/>
        <end position="151"/>
    </location>
</feature>
<feature type="transmembrane region" description="Helical; Name=4" evidence="3">
    <location>
        <begin position="152"/>
        <end position="172"/>
    </location>
</feature>
<feature type="topological domain" description="Extracellular" evidence="7">
    <location>
        <begin position="173"/>
        <end position="199"/>
    </location>
</feature>
<feature type="transmembrane region" description="Helical; Name=5" evidence="3">
    <location>
        <begin position="200"/>
        <end position="224"/>
    </location>
</feature>
<feature type="topological domain" description="Cytoplasmic" evidence="7">
    <location>
        <begin position="225"/>
        <end position="261"/>
    </location>
</feature>
<feature type="transmembrane region" description="Helical; Name=6" evidence="3">
    <location>
        <begin position="262"/>
        <end position="283"/>
    </location>
</feature>
<feature type="topological domain" description="Extracellular" evidence="7">
    <location>
        <begin position="284"/>
        <end position="293"/>
    </location>
</feature>
<feature type="transmembrane region" description="Helical; Name=7" evidence="3">
    <location>
        <begin position="294"/>
        <end position="315"/>
    </location>
</feature>
<feature type="topological domain" description="Cytoplasmic" evidence="7">
    <location>
        <begin position="316"/>
        <end position="464"/>
    </location>
</feature>
<feature type="region of interest" description="Disordered" evidence="6">
    <location>
        <begin position="344"/>
        <end position="464"/>
    </location>
</feature>
<feature type="short sequence motif" description="'Ionic lock' involved in activated form stabilization" evidence="1">
    <location>
        <begin position="132"/>
        <end position="134"/>
    </location>
</feature>
<feature type="compositionally biased region" description="Low complexity" evidence="6">
    <location>
        <begin position="367"/>
        <end position="401"/>
    </location>
</feature>
<feature type="compositionally biased region" description="Pro residues" evidence="6">
    <location>
        <begin position="416"/>
        <end position="425"/>
    </location>
</feature>
<feature type="compositionally biased region" description="Pro residues" evidence="6">
    <location>
        <begin position="434"/>
        <end position="452"/>
    </location>
</feature>
<feature type="modified residue" description="N6-(retinylidene)lysine" evidence="1">
    <location>
        <position position="305"/>
    </location>
</feature>
<feature type="lipid moiety-binding region" description="S-palmitoyl cysteine" evidence="1">
    <location>
        <position position="336"/>
    </location>
</feature>
<feature type="lipid moiety-binding region" description="S-palmitoyl cysteine" evidence="1">
    <location>
        <position position="337"/>
    </location>
</feature>
<feature type="glycosylation site" description="N-linked (GlcNAc...) asparagine" evidence="4">
    <location>
        <position position="8"/>
    </location>
</feature>
<feature type="disulfide bond" evidence="5">
    <location>
        <begin position="108"/>
        <end position="186"/>
    </location>
</feature>
<comment type="function">
    <text evidence="2 3">Photoreceptor required for image-forming vision at low light intensity. Light-induced isomerization of 11-cis to all-trans retinal triggers a conformational change that activates signaling via G-proteins. Signaling mediates the activation of phospholipase C (By similarity). Subsequent receptor phosphorylation mediates displacement of the bound G-protein alpha subunit by arrestin and terminates signaling (By similarity).</text>
</comment>
<comment type="subcellular location">
    <subcellularLocation>
        <location evidence="3">Cell projection</location>
        <location evidence="3">Rhabdomere membrane</location>
        <topology evidence="3">Multi-pass membrane protein</topology>
    </subcellularLocation>
</comment>
<comment type="PTM">
    <text evidence="1 3">Contains one covalently linked retinal chromophore. Upon light absorption, the covalently bound 11-cis-retinal is converted to all-trans-retinal (By similarity). After hydrolysis of the Schiff base and release of the covalently bound all-trans-retinal, active rhodopsin is regenerated by binding of a fresh molecule of 11-cis-retinal (By similarity).</text>
</comment>
<comment type="similarity">
    <text evidence="5">Belongs to the G-protein coupled receptor 1 family. Opsin subfamily.</text>
</comment>
<accession>O16005</accession>
<evidence type="ECO:0000250" key="1">
    <source>
        <dbReference type="UniProtKB" id="P02699"/>
    </source>
</evidence>
<evidence type="ECO:0000250" key="2">
    <source>
        <dbReference type="UniProtKB" id="P08100"/>
    </source>
</evidence>
<evidence type="ECO:0000250" key="3">
    <source>
        <dbReference type="UniProtKB" id="P31356"/>
    </source>
</evidence>
<evidence type="ECO:0000255" key="4"/>
<evidence type="ECO:0000255" key="5">
    <source>
        <dbReference type="PROSITE-ProRule" id="PRU00521"/>
    </source>
</evidence>
<evidence type="ECO:0000256" key="6">
    <source>
        <dbReference type="SAM" id="MobiDB-lite"/>
    </source>
</evidence>
<evidence type="ECO:0000305" key="7"/>
<protein>
    <recommendedName>
        <fullName>Rhodopsin</fullName>
    </recommendedName>
</protein>
<sequence>MGRDIPDNETWWYNPTMEVHPHWKQFNQVPDAVYYSLGIFIGICGIIGCTGNGIVIYLFTKTKSLQTPANMFIINLAFSDFTFSLVNGFPLMTISCFIKKWVFGMAACKVYGFIGGIFGLMSIMTMSMISIDRYNVIGRPMAASKKMSHRRAFLMIIFVWMWSTLWSIGPIFGWGAYVLEGVLCNCSFDYITRDSATRSNIVCMYIFAFCFPILIIFFCYFNIVMAVSNHEKEMAAMAKRLNAKELRKAQAGASAEMKLAKISIVIVTQFLLSWSPYAVVALLAQFGPIEWVTPYAAQLPVMFAKASAIHNPLIYSVSHPKFREAIAENFPWIITCCQFDEKEVEDDKDAETEIPATEQSGGESADAAQMKEMMAMMQKMQQQQAAYPPQGAYPPQGGYPPQGYPPPPAQGGYPPQGYPPPPQGYPPAQGYPPQGYPPPQGAPPQGAPPQAAPPQGVDNQAYQA</sequence>